<comment type="function">
    <text evidence="3">Probable proton-coupled zinc ion antiporter mediating the import of zinc from cytoplasm into synaptic vesicles and participating to cellular zinc ion homeostasis in the brain.</text>
</comment>
<comment type="catalytic activity">
    <reaction evidence="3">
        <text>Zn(2+)(in) + 2 H(+)(out) = Zn(2+)(out) + 2 H(+)(in)</text>
        <dbReference type="Rhea" id="RHEA:72627"/>
        <dbReference type="ChEBI" id="CHEBI:15378"/>
        <dbReference type="ChEBI" id="CHEBI:29105"/>
    </reaction>
</comment>
<comment type="subunit">
    <text evidence="3">Homodimer. Homodimerization could regulate efficiency of zinc transport. Interacts with TMEM163.</text>
</comment>
<comment type="subcellular location">
    <subcellularLocation>
        <location evidence="3">Cytoplasmic vesicle</location>
        <location evidence="3">Secretory vesicle</location>
        <location evidence="3">Synaptic vesicle membrane</location>
        <topology evidence="4">Multi-pass membrane protein</topology>
    </subcellularLocation>
    <subcellularLocation>
        <location evidence="1">Synapse</location>
        <location evidence="1">Synaptosome</location>
    </subcellularLocation>
    <subcellularLocation>
        <location evidence="3">Late endosome membrane</location>
        <topology evidence="4">Multi-pass membrane protein</topology>
    </subcellularLocation>
    <subcellularLocation>
        <location evidence="3">Lysosome membrane</location>
        <topology evidence="4">Multi-pass membrane protein</topology>
    </subcellularLocation>
</comment>
<comment type="alternative products">
    <event type="alternative splicing"/>
    <isoform>
        <id>Q6QIX3-1</id>
        <name>1</name>
        <sequence type="displayed"/>
    </isoform>
    <isoform>
        <id>Q6QIX3-2</id>
        <name>2</name>
        <sequence type="described" ref="VSP_036043"/>
    </isoform>
</comment>
<comment type="similarity">
    <text evidence="7">Belongs to the cation diffusion facilitator (CDF) transporter (TC 2.A.4) family. SLC30A subfamily.</text>
</comment>
<gene>
    <name evidence="8" type="primary">Slc30a3</name>
</gene>
<feature type="chain" id="PRO_0000357045" description="Probable proton-coupled zinc antiporter SLC30A3">
    <location>
        <begin position="1"/>
        <end position="388"/>
    </location>
</feature>
<feature type="topological domain" description="Cytoplasmic" evidence="7">
    <location>
        <begin position="1"/>
        <end position="75"/>
    </location>
</feature>
<feature type="transmembrane region" description="Helical" evidence="4">
    <location>
        <begin position="76"/>
        <end position="96"/>
    </location>
</feature>
<feature type="topological domain" description="Lumenal" evidence="7">
    <location>
        <begin position="97"/>
        <end position="105"/>
    </location>
</feature>
<feature type="transmembrane region" description="Helical" evidence="4">
    <location>
        <begin position="106"/>
        <end position="126"/>
    </location>
</feature>
<feature type="topological domain" description="Cytoplasmic" evidence="7">
    <location>
        <begin position="127"/>
        <end position="145"/>
    </location>
</feature>
<feature type="transmembrane region" description="Helical" evidence="4">
    <location>
        <begin position="146"/>
        <end position="166"/>
    </location>
</feature>
<feature type="topological domain" description="Lumenal" evidence="7">
    <location>
        <begin position="167"/>
        <end position="177"/>
    </location>
</feature>
<feature type="transmembrane region" description="Helical" evidence="4">
    <location>
        <begin position="178"/>
        <end position="198"/>
    </location>
</feature>
<feature type="topological domain" description="Cytoplasmic" evidence="7">
    <location>
        <begin position="199"/>
        <end position="235"/>
    </location>
</feature>
<feature type="transmembrane region" description="Helical" evidence="4">
    <location>
        <begin position="236"/>
        <end position="256"/>
    </location>
</feature>
<feature type="topological domain" description="Lumenal" evidence="7">
    <location>
        <begin position="257"/>
        <end position="263"/>
    </location>
</feature>
<feature type="transmembrane region" description="Helical" evidence="4">
    <location>
        <begin position="264"/>
        <end position="284"/>
    </location>
</feature>
<feature type="topological domain" description="Cytoplasmic" evidence="7">
    <location>
        <begin position="285"/>
        <end position="388"/>
    </location>
</feature>
<feature type="region of interest" description="Disordered" evidence="5">
    <location>
        <begin position="1"/>
        <end position="42"/>
    </location>
</feature>
<feature type="binding site" evidence="2">
    <location>
        <position position="108"/>
    </location>
    <ligand>
        <name>Zn(2+)</name>
        <dbReference type="ChEBI" id="CHEBI:29105"/>
        <note>transported zinc</note>
    </ligand>
</feature>
<feature type="binding site" evidence="2">
    <location>
        <position position="112"/>
    </location>
    <ligand>
        <name>Zn(2+)</name>
        <dbReference type="ChEBI" id="CHEBI:29105"/>
        <note>transported zinc</note>
    </ligand>
</feature>
<feature type="binding site" evidence="2">
    <location>
        <position position="238"/>
    </location>
    <ligand>
        <name>Zn(2+)</name>
        <dbReference type="ChEBI" id="CHEBI:29105"/>
        <note>transported zinc</note>
    </ligand>
</feature>
<feature type="binding site" evidence="2">
    <location>
        <position position="242"/>
    </location>
    <ligand>
        <name>Zn(2+)</name>
        <dbReference type="ChEBI" id="CHEBI:29105"/>
        <note>transported zinc</note>
    </ligand>
</feature>
<feature type="modified residue" description="Phosphoserine" evidence="9">
    <location>
        <position position="63"/>
    </location>
</feature>
<feature type="modified residue" description="Phosphoserine" evidence="9">
    <location>
        <position position="66"/>
    </location>
</feature>
<feature type="splice variant" id="VSP_036043" description="In isoform 2." evidence="6">
    <location>
        <begin position="1"/>
        <end position="49"/>
    </location>
</feature>
<organism>
    <name type="scientific">Rattus norvegicus</name>
    <name type="common">Rat</name>
    <dbReference type="NCBI Taxonomy" id="10116"/>
    <lineage>
        <taxon>Eukaryota</taxon>
        <taxon>Metazoa</taxon>
        <taxon>Chordata</taxon>
        <taxon>Craniata</taxon>
        <taxon>Vertebrata</taxon>
        <taxon>Euteleostomi</taxon>
        <taxon>Mammalia</taxon>
        <taxon>Eutheria</taxon>
        <taxon>Euarchontoglires</taxon>
        <taxon>Glires</taxon>
        <taxon>Rodentia</taxon>
        <taxon>Myomorpha</taxon>
        <taxon>Muroidea</taxon>
        <taxon>Muridae</taxon>
        <taxon>Murinae</taxon>
        <taxon>Rattus</taxon>
    </lineage>
</organism>
<protein>
    <recommendedName>
        <fullName evidence="7">Probable proton-coupled zinc antiporter SLC30A3</fullName>
    </recommendedName>
    <alternativeName>
        <fullName evidence="8">Solute carrier family 30 member 3</fullName>
    </alternativeName>
    <alternativeName>
        <fullName evidence="1">Zinc transporter 3</fullName>
        <shortName evidence="1">ZnT-3</shortName>
    </alternativeName>
</protein>
<evidence type="ECO:0000250" key="1">
    <source>
        <dbReference type="UniProtKB" id="P97441"/>
    </source>
</evidence>
<evidence type="ECO:0000250" key="2">
    <source>
        <dbReference type="UniProtKB" id="Q8IWU4"/>
    </source>
</evidence>
<evidence type="ECO:0000250" key="3">
    <source>
        <dbReference type="UniProtKB" id="Q99726"/>
    </source>
</evidence>
<evidence type="ECO:0000255" key="4"/>
<evidence type="ECO:0000256" key="5">
    <source>
        <dbReference type="SAM" id="MobiDB-lite"/>
    </source>
</evidence>
<evidence type="ECO:0000303" key="6">
    <source>
    </source>
</evidence>
<evidence type="ECO:0000305" key="7"/>
<evidence type="ECO:0000312" key="8">
    <source>
        <dbReference type="RGD" id="1359689"/>
    </source>
</evidence>
<evidence type="ECO:0007744" key="9">
    <source>
    </source>
</evidence>
<sequence length="388" mass="41898">MEPSPASGGSETTRLVSPRDRSSAGGGLRLKSLFTEPSEPLPEGPKLEGMAFHHCHKNRVSQSGLSPERAQARRQLYAACVVCFIFMAGEVVGGYLAHSLAIMTDAAHLLADIGSMMASLFSLWLSTRPATRTMTFGWHRSETLGALASVVSLWIVTGILLYLAFLRLLHSDYHIEAGAMLLTASIAVCANMIMAFVLHQTGAPHSHGPRGAEYAPLEEGHGHPLSLGNTSVRAAFVHVLGDLLQSLGVLAASILIYFKPQYKVADPISTFLFSICALGSTAPTLRDVLLVLMEGAPRSVEFEPVRDTLLSVPGVRATHDLHLWALTLTYHVASAHLAIDSTADPEAILAEASSRLYSRFGFSSCTLQVEKYRSEMAHCLRCREPPKA</sequence>
<accession>Q6QIX3</accession>
<accession>Q5RJT1</accession>
<proteinExistence type="evidence at protein level"/>
<name>ZNT3_RAT</name>
<dbReference type="EMBL" id="AY538655">
    <property type="protein sequence ID" value="AAS46250.1"/>
    <property type="molecule type" value="mRNA"/>
</dbReference>
<dbReference type="EMBL" id="CH473947">
    <property type="protein sequence ID" value="EDM02934.1"/>
    <property type="molecule type" value="Genomic_DNA"/>
</dbReference>
<dbReference type="EMBL" id="BC086513">
    <property type="protein sequence ID" value="AAH86513.1"/>
    <property type="molecule type" value="mRNA"/>
</dbReference>
<dbReference type="RefSeq" id="NP_001013261.1">
    <molecule id="Q6QIX3-1"/>
    <property type="nucleotide sequence ID" value="NM_001013243.1"/>
</dbReference>
<dbReference type="RefSeq" id="XP_008762748.1">
    <molecule id="Q6QIX3-2"/>
    <property type="nucleotide sequence ID" value="XM_008764526.4"/>
</dbReference>
<dbReference type="RefSeq" id="XP_008762749.1">
    <molecule id="Q6QIX3-2"/>
    <property type="nucleotide sequence ID" value="XM_008764527.4"/>
</dbReference>
<dbReference type="RefSeq" id="XP_008762750.1">
    <molecule id="Q6QIX3-2"/>
    <property type="nucleotide sequence ID" value="XM_008764528.3"/>
</dbReference>
<dbReference type="RefSeq" id="XP_038968549.1">
    <molecule id="Q6QIX3-2"/>
    <property type="nucleotide sequence ID" value="XM_039112621.2"/>
</dbReference>
<dbReference type="RefSeq" id="XP_038968550.1">
    <molecule id="Q6QIX3-2"/>
    <property type="nucleotide sequence ID" value="XM_039112622.2"/>
</dbReference>
<dbReference type="SMR" id="Q6QIX3"/>
<dbReference type="BioGRID" id="266006">
    <property type="interactions" value="1"/>
</dbReference>
<dbReference type="FunCoup" id="Q6QIX3">
    <property type="interactions" value="80"/>
</dbReference>
<dbReference type="IntAct" id="Q6QIX3">
    <property type="interactions" value="2"/>
</dbReference>
<dbReference type="MINT" id="Q6QIX3"/>
<dbReference type="STRING" id="10116.ENSRNOP00000008126"/>
<dbReference type="iPTMnet" id="Q6QIX3"/>
<dbReference type="PhosphoSitePlus" id="Q6QIX3"/>
<dbReference type="PaxDb" id="10116-ENSRNOP00000008126"/>
<dbReference type="Ensembl" id="ENSRNOT00000008126.8">
    <molecule id="Q6QIX3-1"/>
    <property type="protein sequence ID" value="ENSRNOP00000008126.5"/>
    <property type="gene ID" value="ENSRNOG00000006204.8"/>
</dbReference>
<dbReference type="GeneID" id="366568"/>
<dbReference type="KEGG" id="rno:366568"/>
<dbReference type="AGR" id="RGD:1359689"/>
<dbReference type="CTD" id="7781"/>
<dbReference type="RGD" id="1359689">
    <property type="gene designation" value="Slc30a3"/>
</dbReference>
<dbReference type="eggNOG" id="KOG1482">
    <property type="taxonomic scope" value="Eukaryota"/>
</dbReference>
<dbReference type="GeneTree" id="ENSGT00940000161480"/>
<dbReference type="HOGENOM" id="CLU_013430_0_1_1"/>
<dbReference type="InParanoid" id="Q6QIX3"/>
<dbReference type="OrthoDB" id="9944568at2759"/>
<dbReference type="PhylomeDB" id="Q6QIX3"/>
<dbReference type="TreeFam" id="TF313382"/>
<dbReference type="PRO" id="PR:Q6QIX3"/>
<dbReference type="Proteomes" id="UP000002494">
    <property type="component" value="Chromosome 6"/>
</dbReference>
<dbReference type="Proteomes" id="UP000234681">
    <property type="component" value="Chromosome 6"/>
</dbReference>
<dbReference type="Bgee" id="ENSRNOG00000006204">
    <property type="expression patterns" value="Expressed in frontal cortex and 19 other cell types or tissues"/>
</dbReference>
<dbReference type="GO" id="GO:0005737">
    <property type="term" value="C:cytoplasm"/>
    <property type="evidence" value="ECO:0000266"/>
    <property type="project" value="RGD"/>
</dbReference>
<dbReference type="GO" id="GO:0098978">
    <property type="term" value="C:glutamatergic synapse"/>
    <property type="evidence" value="ECO:0000266"/>
    <property type="project" value="RGD"/>
</dbReference>
<dbReference type="GO" id="GO:0097457">
    <property type="term" value="C:hippocampal mossy fiber"/>
    <property type="evidence" value="ECO:0000266"/>
    <property type="project" value="RGD"/>
</dbReference>
<dbReference type="GO" id="GO:0098686">
    <property type="term" value="C:hippocampal mossy fiber to CA3 synapse"/>
    <property type="evidence" value="ECO:0000266"/>
    <property type="project" value="RGD"/>
</dbReference>
<dbReference type="GO" id="GO:0005770">
    <property type="term" value="C:late endosome"/>
    <property type="evidence" value="ECO:0000266"/>
    <property type="project" value="RGD"/>
</dbReference>
<dbReference type="GO" id="GO:0031902">
    <property type="term" value="C:late endosome membrane"/>
    <property type="evidence" value="ECO:0007669"/>
    <property type="project" value="UniProtKB-SubCell"/>
</dbReference>
<dbReference type="GO" id="GO:0005765">
    <property type="term" value="C:lysosomal membrane"/>
    <property type="evidence" value="ECO:0007669"/>
    <property type="project" value="UniProtKB-SubCell"/>
</dbReference>
<dbReference type="GO" id="GO:1990742">
    <property type="term" value="C:microvesicle"/>
    <property type="evidence" value="ECO:0000266"/>
    <property type="project" value="RGD"/>
</dbReference>
<dbReference type="GO" id="GO:0043005">
    <property type="term" value="C:neuron projection"/>
    <property type="evidence" value="ECO:0000250"/>
    <property type="project" value="UniProtKB"/>
</dbReference>
<dbReference type="GO" id="GO:0005886">
    <property type="term" value="C:plasma membrane"/>
    <property type="evidence" value="ECO:0000318"/>
    <property type="project" value="GO_Central"/>
</dbReference>
<dbReference type="GO" id="GO:0008021">
    <property type="term" value="C:synaptic vesicle"/>
    <property type="evidence" value="ECO:0000250"/>
    <property type="project" value="UniProtKB"/>
</dbReference>
<dbReference type="GO" id="GO:0030672">
    <property type="term" value="C:synaptic vesicle membrane"/>
    <property type="evidence" value="ECO:0000266"/>
    <property type="project" value="RGD"/>
</dbReference>
<dbReference type="GO" id="GO:0015297">
    <property type="term" value="F:antiporter activity"/>
    <property type="evidence" value="ECO:0007669"/>
    <property type="project" value="UniProtKB-KW"/>
</dbReference>
<dbReference type="GO" id="GO:0046872">
    <property type="term" value="F:metal ion binding"/>
    <property type="evidence" value="ECO:0007669"/>
    <property type="project" value="UniProtKB-KW"/>
</dbReference>
<dbReference type="GO" id="GO:0005385">
    <property type="term" value="F:zinc ion transmembrane transporter activity"/>
    <property type="evidence" value="ECO:0000266"/>
    <property type="project" value="RGD"/>
</dbReference>
<dbReference type="GO" id="GO:0051050">
    <property type="term" value="P:positive regulation of transport"/>
    <property type="evidence" value="ECO:0000266"/>
    <property type="project" value="RGD"/>
</dbReference>
<dbReference type="GO" id="GO:0010043">
    <property type="term" value="P:response to zinc ion"/>
    <property type="evidence" value="ECO:0000318"/>
    <property type="project" value="GO_Central"/>
</dbReference>
<dbReference type="GO" id="GO:0140916">
    <property type="term" value="P:zinc ion import into lysosome"/>
    <property type="evidence" value="ECO:0000266"/>
    <property type="project" value="RGD"/>
</dbReference>
<dbReference type="GO" id="GO:0099180">
    <property type="term" value="P:zinc ion import into synaptic vesicle"/>
    <property type="evidence" value="ECO:0000266"/>
    <property type="project" value="RGD"/>
</dbReference>
<dbReference type="GO" id="GO:0071577">
    <property type="term" value="P:zinc ion transmembrane transport"/>
    <property type="evidence" value="ECO:0000250"/>
    <property type="project" value="UniProtKB"/>
</dbReference>
<dbReference type="FunFam" id="1.20.1510.10:FF:000002">
    <property type="entry name" value="zinc transporter 3 isoform X1"/>
    <property type="match status" value="1"/>
</dbReference>
<dbReference type="Gene3D" id="1.20.1510.10">
    <property type="entry name" value="Cation efflux protein transmembrane domain"/>
    <property type="match status" value="1"/>
</dbReference>
<dbReference type="InterPro" id="IPR002524">
    <property type="entry name" value="Cation_efflux"/>
</dbReference>
<dbReference type="InterPro" id="IPR036837">
    <property type="entry name" value="Cation_efflux_CTD_sf"/>
</dbReference>
<dbReference type="InterPro" id="IPR027469">
    <property type="entry name" value="Cation_efflux_TMD_sf"/>
</dbReference>
<dbReference type="InterPro" id="IPR050681">
    <property type="entry name" value="CDF/SLC30A"/>
</dbReference>
<dbReference type="NCBIfam" id="TIGR01297">
    <property type="entry name" value="CDF"/>
    <property type="match status" value="1"/>
</dbReference>
<dbReference type="PANTHER" id="PTHR11562">
    <property type="entry name" value="CATION EFFLUX PROTEIN/ ZINC TRANSPORTER"/>
    <property type="match status" value="1"/>
</dbReference>
<dbReference type="PANTHER" id="PTHR11562:SF30">
    <property type="entry name" value="PROTON-COUPLED ZINC ANTIPORTER SLC30A3-RELATED"/>
    <property type="match status" value="1"/>
</dbReference>
<dbReference type="Pfam" id="PF01545">
    <property type="entry name" value="Cation_efflux"/>
    <property type="match status" value="1"/>
</dbReference>
<dbReference type="SUPFAM" id="SSF160240">
    <property type="entry name" value="Cation efflux protein cytoplasmic domain-like"/>
    <property type="match status" value="1"/>
</dbReference>
<dbReference type="SUPFAM" id="SSF161111">
    <property type="entry name" value="Cation efflux protein transmembrane domain-like"/>
    <property type="match status" value="1"/>
</dbReference>
<keyword id="KW-0025">Alternative splicing</keyword>
<keyword id="KW-0050">Antiport</keyword>
<keyword id="KW-0968">Cytoplasmic vesicle</keyword>
<keyword id="KW-0967">Endosome</keyword>
<keyword id="KW-0406">Ion transport</keyword>
<keyword id="KW-0458">Lysosome</keyword>
<keyword id="KW-0472">Membrane</keyword>
<keyword id="KW-0479">Metal-binding</keyword>
<keyword id="KW-0597">Phosphoprotein</keyword>
<keyword id="KW-1185">Reference proteome</keyword>
<keyword id="KW-0770">Synapse</keyword>
<keyword id="KW-0771">Synaptosome</keyword>
<keyword id="KW-0812">Transmembrane</keyword>
<keyword id="KW-1133">Transmembrane helix</keyword>
<keyword id="KW-0813">Transport</keyword>
<keyword id="KW-0862">Zinc</keyword>
<keyword id="KW-0864">Zinc transport</keyword>
<reference key="1">
    <citation type="submission" date="2004-02" db="EMBL/GenBank/DDBJ databases">
        <authorList>
            <person name="Cowie T.F."/>
            <person name="Kanellakis S."/>
            <person name="Masters C.L."/>
            <person name="Bush A.I."/>
        </authorList>
    </citation>
    <scope>NUCLEOTIDE SEQUENCE [MRNA] (ISOFORM 1)</scope>
    <source>
        <strain>Sprague-Dawley</strain>
    </source>
</reference>
<reference key="2">
    <citation type="submission" date="2007-06" db="EMBL/GenBank/DDBJ databases">
        <authorList>
            <person name="Mural R.J."/>
            <person name="Adams M.D."/>
            <person name="Myers E.W."/>
            <person name="Smith H.O."/>
            <person name="Venter J.C."/>
        </authorList>
    </citation>
    <scope>NUCLEOTIDE SEQUENCE [LARGE SCALE GENOMIC DNA]</scope>
</reference>
<reference key="3">
    <citation type="journal article" date="2004" name="Genome Res.">
        <title>The status, quality, and expansion of the NIH full-length cDNA project: the Mammalian Gene Collection (MGC).</title>
        <authorList>
            <consortium name="The MGC Project Team"/>
        </authorList>
    </citation>
    <scope>NUCLEOTIDE SEQUENCE [LARGE SCALE MRNA] (ISOFORM 2)</scope>
    <source>
        <tissue>Testis</tissue>
    </source>
</reference>
<reference key="4">
    <citation type="journal article" date="2012" name="Nat. Commun.">
        <title>Quantitative maps of protein phosphorylation sites across 14 different rat organs and tissues.</title>
        <authorList>
            <person name="Lundby A."/>
            <person name="Secher A."/>
            <person name="Lage K."/>
            <person name="Nordsborg N.B."/>
            <person name="Dmytriyev A."/>
            <person name="Lundby C."/>
            <person name="Olsen J.V."/>
        </authorList>
    </citation>
    <scope>PHOSPHORYLATION [LARGE SCALE ANALYSIS] AT SER-63 AND SER-66</scope>
    <scope>IDENTIFICATION BY MASS SPECTROMETRY [LARGE SCALE ANALYSIS]</scope>
</reference>